<accession>P25791</accession>
<accession>Q9HD58</accession>
<proteinExistence type="evidence at protein level"/>
<reference key="1">
    <citation type="journal article" date="1991" name="Oncogene">
        <title>TTG-2, a new gene encoding a cysteine-rich protein with the LIM motif, is overexpressed in acute T-cell leukaemia with the t(11;14)(p13;q11).</title>
        <authorList>
            <person name="Royer-Pokora B."/>
            <person name="Loos L."/>
            <person name="Ludwig W.D."/>
        </authorList>
    </citation>
    <scope>NUCLEOTIDE SEQUENCE [MRNA] (ISOFORM 3)</scope>
    <scope>INVOLVEMENT IN T-CELL ACUTE LYMPHOBLASTIC LEUKEMIA</scope>
    <source>
        <tissue>Kidney</tissue>
    </source>
</reference>
<reference key="2">
    <citation type="journal article" date="2004" name="Genome Res.">
        <title>The status, quality, and expansion of the NIH full-length cDNA project: the Mammalian Gene Collection (MGC).</title>
        <authorList>
            <consortium name="The MGC Project Team"/>
        </authorList>
    </citation>
    <scope>NUCLEOTIDE SEQUENCE [LARGE SCALE MRNA] (ISOFORMS 1 AND 2)</scope>
    <source>
        <tissue>Brain</tissue>
        <tissue>Colon</tissue>
    </source>
</reference>
<reference key="3">
    <citation type="submission" date="2000-04" db="EMBL/GenBank/DDBJ databases">
        <title>New 5'-end of LMO2 (TTG-2/RBTN2).</title>
        <authorList>
            <person name="Zhu T."/>
        </authorList>
    </citation>
    <scope>NUCLEOTIDE SEQUENCE [MRNA] OF 15-158 (ISOFORM 1)</scope>
    <source>
        <tissue>Kidney</tissue>
    </source>
</reference>
<reference key="4">
    <citation type="journal article" date="1997" name="Oncogene">
        <title>T-cell oncogene rhombotin-2 interacts with retinoblastoma-binding protein 2.</title>
        <authorList>
            <person name="Mao S."/>
            <person name="Neale G.A.M."/>
            <person name="Goorha R.M."/>
        </authorList>
    </citation>
    <scope>INTERACTION WITH KDM5A</scope>
</reference>
<reference key="5">
    <citation type="journal article" date="2005" name="Nucleic Acids Res.">
        <title>Human Bex2 interacts with LMO2 and regulates the transcriptional activity of a novel DNA-binding complex.</title>
        <authorList>
            <person name="Han C."/>
            <person name="Liu H."/>
            <person name="Liu J."/>
            <person name="Yin K."/>
            <person name="Xie Y."/>
            <person name="Shen X."/>
            <person name="Wang Y."/>
            <person name="Yuan J."/>
            <person name="Qiang B."/>
            <person name="Liu Y.-J."/>
            <person name="Peng X."/>
        </authorList>
    </citation>
    <scope>INTERACTION WITH BEX2</scope>
</reference>
<comment type="function">
    <text>Acts with TAL1/SCL to regulate red blood cell development. Also acts with LDB1 to maintain erythroid precursors in an immature state.</text>
</comment>
<comment type="subunit">
    <text evidence="1 3 4">Interacts via its LIM domains with ELF2 and LDB1. Also interacts with basic helix-loop-helix protein TAL1/SCL and can assemble in a complex with LMO2 and TAL1/SCL (By similarity). Interacts with BEX2 and KDM5A.</text>
</comment>
<comment type="interaction">
    <interactant intactId="EBI-739696">
        <id>P25791</id>
    </interactant>
    <interactant intactId="EBI-743598">
        <id>Q9NYB9</id>
        <label>ABI2</label>
    </interactant>
    <organismsDiffer>false</organismsDiffer>
    <experiments>5</experiments>
</comment>
<comment type="interaction">
    <interactant intactId="EBI-739696">
        <id>P25791</id>
    </interactant>
    <interactant intactId="EBI-10173507">
        <id>Q6UY14-3</id>
        <label>ADAMTSL4</label>
    </interactant>
    <organismsDiffer>false</organismsDiffer>
    <experiments>3</experiments>
</comment>
<comment type="interaction">
    <interactant intactId="EBI-739696">
        <id>P25791</id>
    </interactant>
    <interactant intactId="EBI-741181">
        <id>Q6RW13</id>
        <label>AGTRAP</label>
    </interactant>
    <organismsDiffer>false</organismsDiffer>
    <experiments>3</experiments>
</comment>
<comment type="interaction">
    <interactant intactId="EBI-739696">
        <id>P25791</id>
    </interactant>
    <interactant intactId="EBI-745226">
        <id>Q13155</id>
        <label>AIMP2</label>
    </interactant>
    <organismsDiffer>false</organismsDiffer>
    <experiments>3</experiments>
</comment>
<comment type="interaction">
    <interactant intactId="EBI-739696">
        <id>P25791</id>
    </interactant>
    <interactant intactId="EBI-744695">
        <id>Q8N9N5</id>
        <label>BANP</label>
    </interactant>
    <organismsDiffer>false</organismsDiffer>
    <experiments>3</experiments>
</comment>
<comment type="interaction">
    <interactant intactId="EBI-739696">
        <id>P25791</id>
    </interactant>
    <interactant intactId="EBI-2548012">
        <id>Q9H2G9</id>
        <label>BLZF1</label>
    </interactant>
    <organismsDiffer>false</organismsDiffer>
    <experiments>3</experiments>
</comment>
<comment type="interaction">
    <interactant intactId="EBI-739696">
        <id>P25791</id>
    </interactant>
    <interactant intactId="EBI-946029">
        <id>Q6P1W5</id>
        <label>C1orf94</label>
    </interactant>
    <organismsDiffer>false</organismsDiffer>
    <experiments>3</experiments>
</comment>
<comment type="interaction">
    <interactant intactId="EBI-739696">
        <id>P25791</id>
    </interactant>
    <interactant intactId="EBI-739580">
        <id>Q13137</id>
        <label>CALCOCO2</label>
    </interactant>
    <organismsDiffer>false</organismsDiffer>
    <experiments>3</experiments>
</comment>
<comment type="interaction">
    <interactant intactId="EBI-739696">
        <id>P25791</id>
    </interactant>
    <interactant intactId="EBI-741724">
        <id>Q8NA61</id>
        <label>CBY2</label>
    </interactant>
    <organismsDiffer>false</organismsDiffer>
    <experiments>3</experiments>
</comment>
<comment type="interaction">
    <interactant intactId="EBI-739696">
        <id>P25791</id>
    </interactant>
    <interactant intactId="EBI-10181162">
        <id>O14627</id>
        <label>CDX4</label>
    </interactant>
    <organismsDiffer>false</organismsDiffer>
    <experiments>3</experiments>
</comment>
<comment type="interaction">
    <interactant intactId="EBI-739696">
        <id>P25791</id>
    </interactant>
    <interactant intactId="EBI-10203156">
        <id>Q8NHS4</id>
        <label>CLHC1</label>
    </interactant>
    <organismsDiffer>false</organismsDiffer>
    <experiments>3</experiments>
</comment>
<comment type="interaction">
    <interactant intactId="EBI-739696">
        <id>P25791</id>
    </interactant>
    <interactant intactId="EBI-2548702">
        <id>Q96DZ9</id>
        <label>CMTM5</label>
    </interactant>
    <organismsDiffer>false</organismsDiffer>
    <experiments>3</experiments>
</comment>
<comment type="interaction">
    <interactant intactId="EBI-739696">
        <id>P25791</id>
    </interactant>
    <interactant intactId="EBI-749662">
        <id>Q8NFT6</id>
        <label>DBF4B</label>
    </interactant>
    <organismsDiffer>false</organismsDiffer>
    <experiments>3</experiments>
</comment>
<comment type="interaction">
    <interactant intactId="EBI-739696">
        <id>P25791</id>
    </interactant>
    <interactant intactId="EBI-10173632">
        <id>P35638-2</id>
        <label>DDIT3</label>
    </interactant>
    <organismsDiffer>false</organismsDiffer>
    <experiments>3</experiments>
</comment>
<comment type="interaction">
    <interactant intactId="EBI-739696">
        <id>P25791</id>
    </interactant>
    <interactant intactId="EBI-712941">
        <id>Q14919</id>
        <label>DRAP1</label>
    </interactant>
    <organismsDiffer>false</organismsDiffer>
    <experiments>3</experiments>
</comment>
<comment type="interaction">
    <interactant intactId="EBI-739696">
        <id>P25791</id>
    </interactant>
    <interactant intactId="EBI-741101">
        <id>Q13643</id>
        <label>FHL3</label>
    </interactant>
    <organismsDiffer>false</organismsDiffer>
    <experiments>3</experiments>
</comment>
<comment type="interaction">
    <interactant intactId="EBI-739696">
        <id>P25791</id>
    </interactant>
    <interactant intactId="EBI-744302">
        <id>P14136</id>
        <label>GFAP</label>
    </interactant>
    <organismsDiffer>false</organismsDiffer>
    <experiments>3</experiments>
</comment>
<comment type="interaction">
    <interactant intactId="EBI-739696">
        <id>P25791</id>
    </interactant>
    <interactant intactId="EBI-618309">
        <id>Q08379</id>
        <label>GOLGA2</label>
    </interactant>
    <organismsDiffer>false</organismsDiffer>
    <experiments>3</experiments>
</comment>
<comment type="interaction">
    <interactant intactId="EBI-739696">
        <id>P25791</id>
    </interactant>
    <interactant intactId="EBI-401755">
        <id>P62993</id>
        <label>GRB2</label>
    </interactant>
    <organismsDiffer>false</organismsDiffer>
    <experiments>3</experiments>
</comment>
<comment type="interaction">
    <interactant intactId="EBI-739696">
        <id>P25791</id>
    </interactant>
    <interactant intactId="EBI-357966">
        <id>P07910</id>
        <label>HNRNPC</label>
    </interactant>
    <organismsDiffer>false</organismsDiffer>
    <experiments>3</experiments>
</comment>
<comment type="interaction">
    <interactant intactId="EBI-739696">
        <id>P25791</id>
    </interactant>
    <interactant intactId="EBI-486809">
        <id>P52272</id>
        <label>HNRNPM</label>
    </interactant>
    <organismsDiffer>false</organismsDiffer>
    <experiments>4</experiments>
</comment>
<comment type="interaction">
    <interactant intactId="EBI-739696">
        <id>P25791</id>
    </interactant>
    <interactant intactId="EBI-746704">
        <id>Q9UJC3</id>
        <label>HOOK1</label>
    </interactant>
    <organismsDiffer>false</organismsDiffer>
    <experiments>3</experiments>
</comment>
<comment type="interaction">
    <interactant intactId="EBI-739696">
        <id>P25791</id>
    </interactant>
    <interactant intactId="EBI-10189681">
        <id>Q96FT9</id>
        <label>IFT43</label>
    </interactant>
    <organismsDiffer>false</organismsDiffer>
    <experiments>3</experiments>
</comment>
<comment type="interaction">
    <interactant intactId="EBI-739696">
        <id>P25791</id>
    </interactant>
    <interactant intactId="EBI-8638439">
        <id>Q8IYA8</id>
        <label>IHO1</label>
    </interactant>
    <organismsDiffer>false</organismsDiffer>
    <experiments>3</experiments>
</comment>
<comment type="interaction">
    <interactant intactId="EBI-739696">
        <id>P25791</id>
    </interactant>
    <interactant intactId="EBI-747204">
        <id>Q9UKT9</id>
        <label>IKZF3</label>
    </interactant>
    <organismsDiffer>false</organismsDiffer>
    <experiments>3</experiments>
</comment>
<comment type="interaction">
    <interactant intactId="EBI-739696">
        <id>P25791</id>
    </interactant>
    <interactant intactId="EBI-2556193">
        <id>Q63ZY3</id>
        <label>KANK2</label>
    </interactant>
    <organismsDiffer>false</organismsDiffer>
    <experiments>3</experiments>
</comment>
<comment type="interaction">
    <interactant intactId="EBI-739696">
        <id>P25791</id>
    </interactant>
    <interactant intactId="EBI-739566">
        <id>P19012</id>
        <label>KRT15</label>
    </interactant>
    <organismsDiffer>false</organismsDiffer>
    <experiments>3</experiments>
</comment>
<comment type="interaction">
    <interactant intactId="EBI-739696">
        <id>P25791</id>
    </interactant>
    <interactant intactId="EBI-10171697">
        <id>Q6A162</id>
        <label>KRT40</label>
    </interactant>
    <organismsDiffer>false</organismsDiffer>
    <experiments>3</experiments>
</comment>
<comment type="interaction">
    <interactant intactId="EBI-739696">
        <id>P25791</id>
    </interactant>
    <interactant intactId="EBI-10172290">
        <id>P60409</id>
        <label>KRTAP10-7</label>
    </interactant>
    <organismsDiffer>false</organismsDiffer>
    <experiments>3</experiments>
</comment>
<comment type="interaction">
    <interactant intactId="EBI-739696">
        <id>P25791</id>
    </interactant>
    <interactant intactId="EBI-677177">
        <id>Q86U70</id>
        <label>LDB1</label>
    </interactant>
    <organismsDiffer>false</organismsDiffer>
    <experiments>9</experiments>
</comment>
<comment type="interaction">
    <interactant intactId="EBI-739696">
        <id>P25791</id>
    </interactant>
    <interactant intactId="EBI-741037">
        <id>Q9BRK4</id>
        <label>LZTS2</label>
    </interactant>
    <organismsDiffer>false</organismsDiffer>
    <experiments>3</experiments>
</comment>
<comment type="interaction">
    <interactant intactId="EBI-739696">
        <id>P25791</id>
    </interactant>
    <interactant intactId="EBI-10182930">
        <id>P43361</id>
        <label>MAGEA8</label>
    </interactant>
    <organismsDiffer>false</organismsDiffer>
    <experiments>3</experiments>
</comment>
<comment type="interaction">
    <interactant intactId="EBI-739696">
        <id>P25791</id>
    </interactant>
    <interactant intactId="EBI-1004115">
        <id>Q15691</id>
        <label>MAPRE1</label>
    </interactant>
    <organismsDiffer>false</organismsDiffer>
    <experiments>6</experiments>
</comment>
<comment type="interaction">
    <interactant intactId="EBI-739696">
        <id>P25791</id>
    </interactant>
    <interactant intactId="EBI-739717">
        <id>Q15555</id>
        <label>MAPRE2</label>
    </interactant>
    <organismsDiffer>false</organismsDiffer>
    <experiments>6</experiments>
</comment>
<comment type="interaction">
    <interactant intactId="EBI-739696">
        <id>P25791</id>
    </interactant>
    <interactant intactId="EBI-726739">
        <id>Q9UPY8</id>
        <label>MAPRE3</label>
    </interactant>
    <organismsDiffer>false</organismsDiffer>
    <experiments>5</experiments>
</comment>
<comment type="interaction">
    <interactant intactId="EBI-739696">
        <id>P25791</id>
    </interactant>
    <interactant intactId="EBI-10182361">
        <id>Q9NS73-5</id>
        <label>MBIP</label>
    </interactant>
    <organismsDiffer>false</organismsDiffer>
    <experiments>3</experiments>
</comment>
<comment type="interaction">
    <interactant intactId="EBI-739696">
        <id>P25791</id>
    </interactant>
    <interactant intactId="EBI-748896">
        <id>Q96HT8</id>
        <label>MRFAP1L1</label>
    </interactant>
    <organismsDiffer>false</organismsDiffer>
    <experiments>3</experiments>
</comment>
<comment type="interaction">
    <interactant intactId="EBI-739696">
        <id>P25791</id>
    </interactant>
    <interactant intactId="EBI-742948">
        <id>Q5JR59</id>
        <label>MTUS2</label>
    </interactant>
    <organismsDiffer>false</organismsDiffer>
    <experiments>3</experiments>
</comment>
<comment type="interaction">
    <interactant intactId="EBI-739696">
        <id>P25791</id>
    </interactant>
    <interactant intactId="EBI-2514973">
        <id>Q92802</id>
        <label>N4BP2L2</label>
    </interactant>
    <organismsDiffer>false</organismsDiffer>
    <experiments>3</experiments>
</comment>
<comment type="interaction">
    <interactant intactId="EBI-739696">
        <id>P25791</id>
    </interactant>
    <interactant intactId="EBI-740897">
        <id>Q9GZT8</id>
        <label>NIF3L1</label>
    </interactant>
    <organismsDiffer>false</organismsDiffer>
    <experiments>3</experiments>
</comment>
<comment type="interaction">
    <interactant intactId="EBI-739696">
        <id>P25791</id>
    </interactant>
    <interactant intactId="EBI-945833">
        <id>Q7Z3S9</id>
        <label>NOTCH2NLA</label>
    </interactant>
    <organismsDiffer>false</organismsDiffer>
    <experiments>3</experiments>
</comment>
<comment type="interaction">
    <interactant intactId="EBI-739696">
        <id>P25791</id>
    </interactant>
    <interactant intactId="EBI-347978">
        <id>P37198</id>
        <label>NUP62</label>
    </interactant>
    <organismsDiffer>false</organismsDiffer>
    <experiments>3</experiments>
</comment>
<comment type="interaction">
    <interactant intactId="EBI-739696">
        <id>P25791</id>
    </interactant>
    <interactant intactId="EBI-10178410">
        <id>Q86Y26</id>
        <label>NUTM1</label>
    </interactant>
    <organismsDiffer>false</organismsDiffer>
    <experiments>3</experiments>
</comment>
<comment type="interaction">
    <interactant intactId="EBI-739696">
        <id>P25791</id>
    </interactant>
    <interactant intactId="EBI-742764">
        <id>O76083</id>
        <label>PDE9A</label>
    </interactant>
    <organismsDiffer>false</organismsDiffer>
    <experiments>3</experiments>
</comment>
<comment type="interaction">
    <interactant intactId="EBI-739696">
        <id>P25791</id>
    </interactant>
    <interactant intactId="EBI-713786">
        <id>Q8IXK0</id>
        <label>PHC2</label>
    </interactant>
    <organismsDiffer>false</organismsDiffer>
    <experiments>4</experiments>
</comment>
<comment type="interaction">
    <interactant intactId="EBI-739696">
        <id>P25791</id>
    </interactant>
    <interactant intactId="EBI-3952014">
        <id>Q13976</id>
        <label>PRKG1</label>
    </interactant>
    <organismsDiffer>false</organismsDiffer>
    <experiments>4</experiments>
</comment>
<comment type="interaction">
    <interactant intactId="EBI-739696">
        <id>P25791</id>
    </interactant>
    <interactant intactId="EBI-307352">
        <id>Q04864</id>
        <label>REL</label>
    </interactant>
    <organismsDiffer>false</organismsDiffer>
    <experiments>3</experiments>
</comment>
<comment type="interaction">
    <interactant intactId="EBI-739696">
        <id>P25791</id>
    </interactant>
    <interactant intactId="EBI-73886">
        <id>Q04206</id>
        <label>RELA</label>
    </interactant>
    <organismsDiffer>false</organismsDiffer>
    <experiments>3</experiments>
</comment>
<comment type="interaction">
    <interactant intactId="EBI-739696">
        <id>P25791</id>
    </interactant>
    <interactant intactId="EBI-726876">
        <id>Q6NUQ1</id>
        <label>RINT1</label>
    </interactant>
    <organismsDiffer>false</organismsDiffer>
    <experiments>4</experiments>
</comment>
<comment type="interaction">
    <interactant intactId="EBI-739696">
        <id>P25791</id>
    </interactant>
    <interactant intactId="EBI-876651">
        <id>Q13464</id>
        <label>ROCK1</label>
    </interactant>
    <organismsDiffer>false</organismsDiffer>
    <experiments>3</experiments>
</comment>
<comment type="interaction">
    <interactant intactId="EBI-739696">
        <id>P25791</id>
    </interactant>
    <interactant intactId="EBI-3957636">
        <id>Q8IYX7</id>
        <label>SAXO1</label>
    </interactant>
    <organismsDiffer>false</organismsDiffer>
    <experiments>4</experiments>
</comment>
<comment type="interaction">
    <interactant intactId="EBI-739696">
        <id>P25791</id>
    </interactant>
    <interactant intactId="EBI-307486">
        <id>P63208</id>
        <label>SKP1</label>
    </interactant>
    <organismsDiffer>false</organismsDiffer>
    <experiments>3</experiments>
</comment>
<comment type="interaction">
    <interactant intactId="EBI-739696">
        <id>P25791</id>
    </interactant>
    <interactant intactId="EBI-3505701">
        <id>P35711</id>
        <label>SOX5</label>
    </interactant>
    <organismsDiffer>false</organismsDiffer>
    <experiments>3</experiments>
</comment>
<comment type="interaction">
    <interactant intactId="EBI-739696">
        <id>P25791</id>
    </interactant>
    <interactant intactId="EBI-2212028">
        <id>Q9Y2D8</id>
        <label>SSX2IP</label>
    </interactant>
    <organismsDiffer>false</organismsDiffer>
    <experiments>3</experiments>
</comment>
<comment type="interaction">
    <interactant intactId="EBI-739696">
        <id>P25791</id>
    </interactant>
    <interactant intactId="EBI-518675">
        <id>P40763</id>
        <label>STAT3</label>
    </interactant>
    <organismsDiffer>false</organismsDiffer>
    <experiments>3</experiments>
</comment>
<comment type="interaction">
    <interactant intactId="EBI-739696">
        <id>P25791</id>
    </interactant>
    <interactant intactId="EBI-10178002">
        <id>P0C1Z6-2</id>
        <label>TFPT</label>
    </interactant>
    <organismsDiffer>false</organismsDiffer>
    <experiments>3</experiments>
</comment>
<comment type="interaction">
    <interactant intactId="EBI-739696">
        <id>P25791</id>
    </interactant>
    <interactant intactId="EBI-717810">
        <id>Q08117</id>
        <label>TLE5</label>
    </interactant>
    <organismsDiffer>false</organismsDiffer>
    <experiments>3</experiments>
</comment>
<comment type="interaction">
    <interactant intactId="EBI-739696">
        <id>P25791</id>
    </interactant>
    <interactant intactId="EBI-740098">
        <id>P36406</id>
        <label>TRIM23</label>
    </interactant>
    <organismsDiffer>false</organismsDiffer>
    <experiments>3</experiments>
</comment>
<comment type="interaction">
    <interactant intactId="EBI-739696">
        <id>P25791</id>
    </interactant>
    <interactant intactId="EBI-2130429">
        <id>Q9BYV2</id>
        <label>TRIM54</label>
    </interactant>
    <organismsDiffer>false</organismsDiffer>
    <experiments>3</experiments>
</comment>
<comment type="interaction">
    <interactant intactId="EBI-739696">
        <id>P25791</id>
    </interactant>
    <interactant intactId="EBI-742327">
        <id>Q15654</id>
        <label>TRIP6</label>
    </interactant>
    <organismsDiffer>false</organismsDiffer>
    <experiments>3</experiments>
</comment>
<comment type="interaction">
    <interactant intactId="EBI-739696">
        <id>P25791</id>
    </interactant>
    <interactant intactId="EBI-739485">
        <id>Q9Y3Q8</id>
        <label>TSC22D4</label>
    </interactant>
    <organismsDiffer>false</organismsDiffer>
    <experiments>3</experiments>
</comment>
<comment type="interaction">
    <interactant intactId="EBI-739696">
        <id>P25791</id>
    </interactant>
    <interactant intactId="EBI-2557363">
        <id>Q9NNX1</id>
        <label>TUFT1</label>
    </interactant>
    <organismsDiffer>false</organismsDiffer>
    <experiments>3</experiments>
</comment>
<comment type="interaction">
    <interactant intactId="EBI-739696">
        <id>P25791</id>
    </interactant>
    <interactant intactId="EBI-10180829">
        <id>Q7KZS0</id>
        <label>UBE2I</label>
    </interactant>
    <organismsDiffer>false</organismsDiffer>
    <experiments>3</experiments>
</comment>
<comment type="interaction">
    <interactant intactId="EBI-739696">
        <id>P25791</id>
    </interactant>
    <interactant intactId="EBI-711679">
        <id>Q9NTW7</id>
        <label>ZFP64</label>
    </interactant>
    <organismsDiffer>false</organismsDiffer>
    <experiments>3</experiments>
</comment>
<comment type="interaction">
    <interactant intactId="EBI-739696">
        <id>P25791</id>
    </interactant>
    <interactant intactId="EBI-707773">
        <id>P17028</id>
        <label>ZNF24</label>
    </interactant>
    <organismsDiffer>false</organismsDiffer>
    <experiments>4</experiments>
</comment>
<comment type="interaction">
    <interactant intactId="EBI-11959475">
        <id>P25791-3</id>
    </interactant>
    <interactant intactId="EBI-11096309">
        <id>Q9NYB9-2</id>
        <label>ABI2</label>
    </interactant>
    <organismsDiffer>false</organismsDiffer>
    <experiments>6</experiments>
</comment>
<comment type="interaction">
    <interactant intactId="EBI-11959475">
        <id>P25791-3</id>
    </interactant>
    <interactant intactId="EBI-10173507">
        <id>Q6UY14-3</id>
        <label>ADAMTSL4</label>
    </interactant>
    <organismsDiffer>false</organismsDiffer>
    <experiments>3</experiments>
</comment>
<comment type="interaction">
    <interactant intactId="EBI-11959475">
        <id>P25791-3</id>
    </interactant>
    <interactant intactId="EBI-745226">
        <id>Q13155</id>
        <label>AIMP2</label>
    </interactant>
    <organismsDiffer>false</organismsDiffer>
    <experiments>6</experiments>
</comment>
<comment type="interaction">
    <interactant intactId="EBI-11959475">
        <id>P25791-3</id>
    </interactant>
    <interactant intactId="EBI-8643161">
        <id>Q9NX04</id>
        <label>AIRIM</label>
    </interactant>
    <organismsDiffer>false</organismsDiffer>
    <experiments>5</experiments>
</comment>
<comment type="interaction">
    <interactant intactId="EBI-11959475">
        <id>P25791-3</id>
    </interactant>
    <interactant intactId="EBI-602199">
        <id>Q12774</id>
        <label>ARHGEF5</label>
    </interactant>
    <organismsDiffer>false</organismsDiffer>
    <experiments>3</experiments>
</comment>
<comment type="interaction">
    <interactant intactId="EBI-11959475">
        <id>P25791-3</id>
    </interactant>
    <interactant intactId="EBI-948603">
        <id>Q03989</id>
        <label>ARID5A</label>
    </interactant>
    <organismsDiffer>false</organismsDiffer>
    <experiments>3</experiments>
</comment>
<comment type="interaction">
    <interactant intactId="EBI-11959475">
        <id>P25791-3</id>
    </interactant>
    <interactant intactId="EBI-765971">
        <id>Q9HBZ2</id>
        <label>ARNT2</label>
    </interactant>
    <organismsDiffer>false</organismsDiffer>
    <experiments>3</experiments>
</comment>
<comment type="interaction">
    <interactant intactId="EBI-11959475">
        <id>P25791-3</id>
    </interactant>
    <interactant intactId="EBI-745689">
        <id>Q7L5A3</id>
        <label>ATOSB</label>
    </interactant>
    <organismsDiffer>false</organismsDiffer>
    <experiments>3</experiments>
</comment>
<comment type="interaction">
    <interactant intactId="EBI-11959475">
        <id>P25791-3</id>
    </interactant>
    <interactant intactId="EBI-1050106">
        <id>O75934</id>
        <label>BCAS2</label>
    </interactant>
    <organismsDiffer>false</organismsDiffer>
    <experiments>3</experiments>
</comment>
<comment type="interaction">
    <interactant intactId="EBI-11959475">
        <id>P25791-3</id>
    </interactant>
    <interactant intactId="EBI-358049">
        <id>Q13895</id>
        <label>BYSL</label>
    </interactant>
    <organismsDiffer>false</organismsDiffer>
    <experiments>3</experiments>
</comment>
<comment type="interaction">
    <interactant intactId="EBI-11959475">
        <id>P25791-3</id>
    </interactant>
    <interactant intactId="EBI-9679045">
        <id>Q9NQL9</id>
        <label>DMRT3</label>
    </interactant>
    <organismsDiffer>false</organismsDiffer>
    <experiments>3</experiments>
</comment>
<comment type="interaction">
    <interactant intactId="EBI-11959475">
        <id>P25791-3</id>
    </interactant>
    <interactant intactId="EBI-712941">
        <id>Q14919</id>
        <label>DRAP1</label>
    </interactant>
    <organismsDiffer>false</organismsDiffer>
    <experiments>3</experiments>
</comment>
<comment type="interaction">
    <interactant intactId="EBI-11959475">
        <id>P25791-3</id>
    </interactant>
    <interactant intactId="EBI-740680">
        <id>Q8WWB3</id>
        <label>DYDC1</label>
    </interactant>
    <organismsDiffer>false</organismsDiffer>
    <experiments>3</experiments>
</comment>
<comment type="interaction">
    <interactant intactId="EBI-11959475">
        <id>P25791-3</id>
    </interactant>
    <interactant intactId="EBI-743105">
        <id>Q5JVL4</id>
        <label>EFHC1</label>
    </interactant>
    <organismsDiffer>false</organismsDiffer>
    <experiments>3</experiments>
</comment>
<comment type="interaction">
    <interactant intactId="EBI-11959475">
        <id>P25791-3</id>
    </interactant>
    <interactant intactId="EBI-2349927">
        <id>Q5JST6</id>
        <label>EFHC2</label>
    </interactant>
    <organismsDiffer>false</organismsDiffer>
    <experiments>3</experiments>
</comment>
<comment type="interaction">
    <interactant intactId="EBI-11959475">
        <id>P25791-3</id>
    </interactant>
    <interactant intactId="EBI-74090">
        <id>Q13541</id>
        <label>EIF4EBP1</label>
    </interactant>
    <organismsDiffer>false</organismsDiffer>
    <experiments>3</experiments>
</comment>
<comment type="interaction">
    <interactant intactId="EBI-11959475">
        <id>P25791-3</id>
    </interactant>
    <interactant intactId="EBI-744099">
        <id>Q9H0I2</id>
        <label>ENKD1</label>
    </interactant>
    <organismsDiffer>false</organismsDiffer>
    <experiments>3</experiments>
</comment>
<comment type="interaction">
    <interactant intactId="EBI-11959475">
        <id>P25791-3</id>
    </interactant>
    <interactant intactId="EBI-12013806">
        <id>Q6NZ36-4</id>
        <label>FAAP20</label>
    </interactant>
    <organismsDiffer>false</organismsDiffer>
    <experiments>3</experiments>
</comment>
<comment type="interaction">
    <interactant intactId="EBI-11959475">
        <id>P25791-3</id>
    </interactant>
    <interactant intactId="EBI-12958227">
        <id>Q86W67</id>
        <label>FAM228A</label>
    </interactant>
    <organismsDiffer>false</organismsDiffer>
    <experiments>3</experiments>
</comment>
<comment type="interaction">
    <interactant intactId="EBI-11959475">
        <id>P25791-3</id>
    </interactant>
    <interactant intactId="EBI-6658203">
        <id>Q86YD7</id>
        <label>FAM90A1</label>
    </interactant>
    <organismsDiffer>false</organismsDiffer>
    <experiments>5</experiments>
</comment>
<comment type="interaction">
    <interactant intactId="EBI-11959475">
        <id>P25791-3</id>
    </interactant>
    <interactant intactId="EBI-750641">
        <id>Q5TD97</id>
        <label>FHL5</label>
    </interactant>
    <organismsDiffer>false</organismsDiffer>
    <experiments>3</experiments>
</comment>
<comment type="interaction">
    <interactant intactId="EBI-11959475">
        <id>P25791-3</id>
    </interactant>
    <interactant intactId="EBI-1052570">
        <id>O95995</id>
        <label>GAS8</label>
    </interactant>
    <organismsDiffer>false</organismsDiffer>
    <experiments>3</experiments>
</comment>
<comment type="interaction">
    <interactant intactId="EBI-11959475">
        <id>P25791-3</id>
    </interactant>
    <interactant intactId="EBI-948296">
        <id>Q9UKD1</id>
        <label>GMEB2</label>
    </interactant>
    <organismsDiffer>false</organismsDiffer>
    <experiments>6</experiments>
</comment>
<comment type="interaction">
    <interactant intactId="EBI-11959475">
        <id>P25791-3</id>
    </interactant>
    <interactant intactId="EBI-715576">
        <id>Q9UQL6</id>
        <label>HDAC5</label>
    </interactant>
    <organismsDiffer>false</organismsDiffer>
    <experiments>3</experiments>
</comment>
<comment type="interaction">
    <interactant intactId="EBI-11959475">
        <id>P25791-3</id>
    </interactant>
    <interactant intactId="EBI-486809">
        <id>P52272</id>
        <label>HNRNPM</label>
    </interactant>
    <organismsDiffer>false</organismsDiffer>
    <experiments>3</experiments>
</comment>
<comment type="interaction">
    <interactant intactId="EBI-11959475">
        <id>P25791-3</id>
    </interactant>
    <interactant intactId="EBI-746704">
        <id>Q9UJC3</id>
        <label>HOOK1</label>
    </interactant>
    <organismsDiffer>false</organismsDiffer>
    <experiments>3</experiments>
</comment>
<comment type="interaction">
    <interactant intactId="EBI-11959475">
        <id>P25791-3</id>
    </interactant>
    <interactant intactId="EBI-12141931">
        <id>Q8NDH6-2</id>
        <label>ICA1L</label>
    </interactant>
    <organismsDiffer>false</organismsDiffer>
    <experiments>3</experiments>
</comment>
<comment type="interaction">
    <interactant intactId="EBI-11959475">
        <id>P25791-3</id>
    </interactant>
    <interactant intactId="EBI-11944538">
        <id>Q96FT9-2</id>
        <label>IFT43</label>
    </interactant>
    <organismsDiffer>false</organismsDiffer>
    <experiments>3</experiments>
</comment>
<comment type="interaction">
    <interactant intactId="EBI-11959475">
        <id>P25791-3</id>
    </interactant>
    <interactant intactId="EBI-8638439">
        <id>Q8IYA8</id>
        <label>IHO1</label>
    </interactant>
    <organismsDiffer>false</organismsDiffer>
    <experiments>3</experiments>
</comment>
<comment type="interaction">
    <interactant intactId="EBI-11959475">
        <id>P25791-3</id>
    </interactant>
    <interactant intactId="EBI-11522367">
        <id>Q13422-7</id>
        <label>IKZF1</label>
    </interactant>
    <organismsDiffer>false</organismsDiffer>
    <experiments>3</experiments>
</comment>
<comment type="interaction">
    <interactant intactId="EBI-11959475">
        <id>P25791-3</id>
    </interactant>
    <interactant intactId="EBI-747204">
        <id>Q9UKT9</id>
        <label>IKZF3</label>
    </interactant>
    <organismsDiffer>false</organismsDiffer>
    <experiments>3</experiments>
</comment>
<comment type="interaction">
    <interactant intactId="EBI-11959475">
        <id>P25791-3</id>
    </interactant>
    <interactant intactId="EBI-6509505">
        <id>Q0VD86</id>
        <label>INCA1</label>
    </interactant>
    <organismsDiffer>false</organismsDiffer>
    <experiments>3</experiments>
</comment>
<comment type="interaction">
    <interactant intactId="EBI-11959475">
        <id>P25791-3</id>
    </interactant>
    <interactant intactId="EBI-2557660">
        <id>Q9ULR0</id>
        <label>ISY1</label>
    </interactant>
    <organismsDiffer>false</organismsDiffer>
    <experiments>3</experiments>
</comment>
<comment type="interaction">
    <interactant intactId="EBI-11959475">
        <id>P25791-3</id>
    </interactant>
    <interactant intactId="EBI-2556193">
        <id>Q63ZY3</id>
        <label>KANK2</label>
    </interactant>
    <organismsDiffer>false</organismsDiffer>
    <experiments>3</experiments>
</comment>
<comment type="interaction">
    <interactant intactId="EBI-11959475">
        <id>P25791-3</id>
    </interactant>
    <interactant intactId="EBI-12024294">
        <id>Q674X7-2</id>
        <label>KAZN</label>
    </interactant>
    <organismsDiffer>false</organismsDiffer>
    <experiments>3</experiments>
</comment>
<comment type="interaction">
    <interactant intactId="EBI-11959475">
        <id>P25791-3</id>
    </interactant>
    <interactant intactId="EBI-12197879">
        <id>O00139-1</id>
        <label>KIF2A</label>
    </interactant>
    <organismsDiffer>false</organismsDiffer>
    <experiments>3</experiments>
</comment>
<comment type="interaction">
    <interactant intactId="EBI-11959475">
        <id>P25791-3</id>
    </interactant>
    <interactant intactId="EBI-10981970">
        <id>Q5T749</id>
        <label>KPRP</label>
    </interactant>
    <organismsDiffer>false</organismsDiffer>
    <experiments>3</experiments>
</comment>
<comment type="interaction">
    <interactant intactId="EBI-11959475">
        <id>P25791-3</id>
    </interactant>
    <interactant intactId="EBI-1047093">
        <id>O76011</id>
        <label>KRT34</label>
    </interactant>
    <organismsDiffer>false</organismsDiffer>
    <experiments>3</experiments>
</comment>
<comment type="interaction">
    <interactant intactId="EBI-11959475">
        <id>P25791-3</id>
    </interactant>
    <interactant intactId="EBI-2949715">
        <id>O95678</id>
        <label>KRT75</label>
    </interactant>
    <organismsDiffer>false</organismsDiffer>
    <experiments>3</experiments>
</comment>
<comment type="interaction">
    <interactant intactId="EBI-11959475">
        <id>P25791-3</id>
    </interactant>
    <interactant intactId="EBI-11999246">
        <id>Q6KB66-2</id>
        <label>KRT80</label>
    </interactant>
    <organismsDiffer>false</organismsDiffer>
    <experiments>5</experiments>
</comment>
<comment type="interaction">
    <interactant intactId="EBI-11959475">
        <id>P25791-3</id>
    </interactant>
    <interactant intactId="EBI-11979761">
        <id>Q86U70-2</id>
        <label>LDB1</label>
    </interactant>
    <organismsDiffer>false</organismsDiffer>
    <experiments>7</experiments>
</comment>
<comment type="interaction">
    <interactant intactId="EBI-11959475">
        <id>P25791-3</id>
    </interactant>
    <interactant intactId="EBI-2865580">
        <id>O43679</id>
        <label>LDB2</label>
    </interactant>
    <organismsDiffer>false</organismsDiffer>
    <experiments>5</experiments>
</comment>
<comment type="interaction">
    <interactant intactId="EBI-11959475">
        <id>P25791-3</id>
    </interactant>
    <interactant intactId="EBI-740738">
        <id>O95751</id>
        <label>LDOC1</label>
    </interactant>
    <organismsDiffer>false</organismsDiffer>
    <experiments>3</experiments>
</comment>
<comment type="interaction">
    <interactant intactId="EBI-11959475">
        <id>P25791-3</id>
    </interactant>
    <interactant intactId="EBI-11959475">
        <id>P25791-3</id>
        <label>LMO2</label>
    </interactant>
    <organismsDiffer>false</organismsDiffer>
    <experiments>3</experiments>
</comment>
<comment type="interaction">
    <interactant intactId="EBI-11959475">
        <id>P25791-3</id>
    </interactant>
    <interactant intactId="EBI-2798728">
        <id>P61968</id>
        <label>LMO4</label>
    </interactant>
    <organismsDiffer>false</organismsDiffer>
    <experiments>3</experiments>
</comment>
<comment type="interaction">
    <interactant intactId="EBI-11959475">
        <id>P25791-3</id>
    </interactant>
    <interactant intactId="EBI-23685399">
        <id>Q0VAK6</id>
        <label>LMOD3</label>
    </interactant>
    <organismsDiffer>false</organismsDiffer>
    <experiments>3</experiments>
</comment>
<comment type="interaction">
    <interactant intactId="EBI-11959475">
        <id>P25791-3</id>
    </interactant>
    <interactant intactId="EBI-1216080">
        <id>Q9Y250</id>
        <label>LZTS1</label>
    </interactant>
    <organismsDiffer>false</organismsDiffer>
    <experiments>3</experiments>
</comment>
<comment type="interaction">
    <interactant intactId="EBI-11959475">
        <id>P25791-3</id>
    </interactant>
    <interactant intactId="EBI-1004115">
        <id>Q15691</id>
        <label>MAPRE1</label>
    </interactant>
    <organismsDiffer>false</organismsDiffer>
    <experiments>6</experiments>
</comment>
<comment type="interaction">
    <interactant intactId="EBI-11959475">
        <id>P25791-3</id>
    </interactant>
    <interactant intactId="EBI-739717">
        <id>Q15555</id>
        <label>MAPRE2</label>
    </interactant>
    <organismsDiffer>false</organismsDiffer>
    <experiments>7</experiments>
</comment>
<comment type="interaction">
    <interactant intactId="EBI-11959475">
        <id>P25791-3</id>
    </interactant>
    <interactant intactId="EBI-726739">
        <id>Q9UPY8</id>
        <label>MAPRE3</label>
    </interactant>
    <organismsDiffer>false</organismsDiffer>
    <experiments>6</experiments>
</comment>
<comment type="interaction">
    <interactant intactId="EBI-11959475">
        <id>P25791-3</id>
    </interactant>
    <interactant intactId="EBI-2555085">
        <id>Q8IVT2</id>
        <label>MISP</label>
    </interactant>
    <organismsDiffer>false</organismsDiffer>
    <experiments>5</experiments>
</comment>
<comment type="interaction">
    <interactant intactId="EBI-11959475">
        <id>P25791-3</id>
    </interactant>
    <interactant intactId="EBI-528768">
        <id>P26038</id>
        <label>MSN</label>
    </interactant>
    <organismsDiffer>false</organismsDiffer>
    <experiments>3</experiments>
</comment>
<comment type="interaction">
    <interactant intactId="EBI-11959475">
        <id>P25791-3</id>
    </interactant>
    <interactant intactId="EBI-5662487">
        <id>Q8TDC0</id>
        <label>MYOZ3</label>
    </interactant>
    <organismsDiffer>false</organismsDiffer>
    <experiments>3</experiments>
</comment>
<comment type="interaction">
    <interactant intactId="EBI-11959475">
        <id>P25791-3</id>
    </interactant>
    <interactant intactId="EBI-10249760">
        <id>Q9UHB4</id>
        <label>NDOR1</label>
    </interactant>
    <organismsDiffer>false</organismsDiffer>
    <experiments>3</experiments>
</comment>
<comment type="interaction">
    <interactant intactId="EBI-11959475">
        <id>P25791-3</id>
    </interactant>
    <interactant intactId="EBI-1246261">
        <id>O14561</id>
        <label>NDUFAB1</label>
    </interactant>
    <organismsDiffer>false</organismsDiffer>
    <experiments>3</experiments>
</comment>
<comment type="interaction">
    <interactant intactId="EBI-11959475">
        <id>P25791-3</id>
    </interactant>
    <interactant intactId="EBI-1246238">
        <id>P17568</id>
        <label>NDUFB7</label>
    </interactant>
    <organismsDiffer>false</organismsDiffer>
    <experiments>3</experiments>
</comment>
<comment type="interaction">
    <interactant intactId="EBI-11959475">
        <id>P25791-3</id>
    </interactant>
    <interactant intactId="EBI-10271199">
        <id>Q8NI38</id>
        <label>NFKBID</label>
    </interactant>
    <organismsDiffer>false</organismsDiffer>
    <experiments>3</experiments>
</comment>
<comment type="interaction">
    <interactant intactId="EBI-11959475">
        <id>P25791-3</id>
    </interactant>
    <interactant intactId="EBI-12025760">
        <id>Q86UR1-2</id>
        <label>NOXA1</label>
    </interactant>
    <organismsDiffer>false</organismsDiffer>
    <experiments>3</experiments>
</comment>
<comment type="interaction">
    <interactant intactId="EBI-11959475">
        <id>P25791-3</id>
    </interactant>
    <interactant intactId="EBI-12028784">
        <id>Q6X4W1-2</id>
        <label>NSMF</label>
    </interactant>
    <organismsDiffer>false</organismsDiffer>
    <experiments>3</experiments>
</comment>
<comment type="interaction">
    <interactant intactId="EBI-11959475">
        <id>P25791-3</id>
    </interactant>
    <interactant intactId="EBI-741158">
        <id>Q96HA8</id>
        <label>NTAQ1</label>
    </interactant>
    <organismsDiffer>false</organismsDiffer>
    <experiments>3</experiments>
</comment>
<comment type="interaction">
    <interactant intactId="EBI-11959475">
        <id>P25791-3</id>
    </interactant>
    <interactant intactId="EBI-11022007">
        <id>Q9HBE1-4</id>
        <label>PATZ1</label>
    </interactant>
    <organismsDiffer>false</organismsDiffer>
    <experiments>3</experiments>
</comment>
<comment type="interaction">
    <interactant intactId="EBI-11959475">
        <id>P25791-3</id>
    </interactant>
    <interactant intactId="EBI-12111000">
        <id>P55771</id>
        <label>PAX9</label>
    </interactant>
    <organismsDiffer>false</organismsDiffer>
    <experiments>3</experiments>
</comment>
<comment type="interaction">
    <interactant intactId="EBI-11959475">
        <id>P25791-3</id>
    </interactant>
    <interactant intactId="EBI-10302990">
        <id>Q9BYU1</id>
        <label>PBX4</label>
    </interactant>
    <organismsDiffer>false</organismsDiffer>
    <experiments>3</experiments>
</comment>
<comment type="interaction">
    <interactant intactId="EBI-11959475">
        <id>P25791-3</id>
    </interactant>
    <interactant intactId="EBI-347928">
        <id>P62487</id>
        <label>POLR2G</label>
    </interactant>
    <organismsDiffer>false</organismsDiffer>
    <experiments>4</experiments>
</comment>
<comment type="interaction">
    <interactant intactId="EBI-11959475">
        <id>P25791-3</id>
    </interactant>
    <interactant intactId="EBI-11320284">
        <id>Q9NQX0</id>
        <label>PRDM6</label>
    </interactant>
    <organismsDiffer>false</organismsDiffer>
    <experiments>3</experiments>
</comment>
<comment type="interaction">
    <interactant intactId="EBI-11959475">
        <id>P25791-3</id>
    </interactant>
    <interactant intactId="EBI-4280187">
        <id>Q13976-2</id>
        <label>PRKG1</label>
    </interactant>
    <organismsDiffer>false</organismsDiffer>
    <experiments>3</experiments>
</comment>
<comment type="interaction">
    <interactant intactId="EBI-11959475">
        <id>P25791-3</id>
    </interactant>
    <interactant intactId="EBI-359352">
        <id>P25786</id>
        <label>PSMA1</label>
    </interactant>
    <organismsDiffer>false</organismsDiffer>
    <experiments>3</experiments>
</comment>
<comment type="interaction">
    <interactant intactId="EBI-11959475">
        <id>P25791-3</id>
    </interactant>
    <interactant intactId="EBI-948278">
        <id>Q15293</id>
        <label>RCN1</label>
    </interactant>
    <organismsDiffer>false</organismsDiffer>
    <experiments>3</experiments>
</comment>
<comment type="interaction">
    <interactant intactId="EBI-11959475">
        <id>P25791-3</id>
    </interactant>
    <interactant intactId="EBI-10174072">
        <id>A6ZKI3</id>
        <label>RTL8C</label>
    </interactant>
    <organismsDiffer>false</organismsDiffer>
    <experiments>3</experiments>
</comment>
<comment type="interaction">
    <interactant intactId="EBI-11959475">
        <id>P25791-3</id>
    </interactant>
    <interactant intactId="EBI-6257312">
        <id>Q9BVN2</id>
        <label>RUSC1</label>
    </interactant>
    <organismsDiffer>false</organismsDiffer>
    <experiments>3</experiments>
</comment>
<comment type="interaction">
    <interactant intactId="EBI-11959475">
        <id>P25791-3</id>
    </interactant>
    <interactant intactId="EBI-3957636">
        <id>Q8IYX7</id>
        <label>SAXO1</label>
    </interactant>
    <organismsDiffer>false</organismsDiffer>
    <experiments>3</experiments>
</comment>
<comment type="interaction">
    <interactant intactId="EBI-11959475">
        <id>P25791-3</id>
    </interactant>
    <interactant intactId="EBI-12000762">
        <id>Q7Z5V6-2</id>
        <label>SAXO4</label>
    </interactant>
    <organismsDiffer>false</organismsDiffer>
    <experiments>3</experiments>
</comment>
<comment type="interaction">
    <interactant intactId="EBI-11959475">
        <id>P25791-3</id>
    </interactant>
    <interactant intactId="EBI-744081">
        <id>Q96EQ0</id>
        <label>SGTB</label>
    </interactant>
    <organismsDiffer>false</organismsDiffer>
    <experiments>3</experiments>
</comment>
<comment type="interaction">
    <interactant intactId="EBI-11959475">
        <id>P25791-3</id>
    </interactant>
    <interactant intactId="EBI-12275818">
        <id>Q53HV7-2</id>
        <label>SMUG1</label>
    </interactant>
    <organismsDiffer>false</organismsDiffer>
    <experiments>4</experiments>
</comment>
<comment type="interaction">
    <interactant intactId="EBI-11959475">
        <id>P25791-3</id>
    </interactant>
    <interactant intactId="EBI-12004298">
        <id>O75971-2</id>
        <label>SNAPC5</label>
    </interactant>
    <organismsDiffer>false</organismsDiffer>
    <experiments>3</experiments>
</comment>
<comment type="interaction">
    <interactant intactId="EBI-11959475">
        <id>P25791-3</id>
    </interactant>
    <interactant intactId="EBI-2853051">
        <id>Q13207</id>
        <label>TBX2</label>
    </interactant>
    <organismsDiffer>false</organismsDiffer>
    <experiments>3</experiments>
</comment>
<comment type="interaction">
    <interactant intactId="EBI-11959475">
        <id>P25791-3</id>
    </interactant>
    <interactant intactId="EBI-3923210">
        <id>Q8TDR4</id>
        <label>TCP10L</label>
    </interactant>
    <organismsDiffer>false</organismsDiffer>
    <experiments>3</experiments>
</comment>
<comment type="interaction">
    <interactant intactId="EBI-11959475">
        <id>P25791-3</id>
    </interactant>
    <interactant intactId="EBI-8644516">
        <id>Q9BXF9</id>
        <label>TEKT3</label>
    </interactant>
    <organismsDiffer>false</organismsDiffer>
    <experiments>3</experiments>
</comment>
<comment type="interaction">
    <interactant intactId="EBI-11959475">
        <id>P25791-3</id>
    </interactant>
    <interactant intactId="EBI-1105213">
        <id>Q9UBB9</id>
        <label>TFIP11</label>
    </interactant>
    <organismsDiffer>false</organismsDiffer>
    <experiments>3</experiments>
</comment>
<comment type="interaction">
    <interactant intactId="EBI-11959475">
        <id>P25791-3</id>
    </interactant>
    <interactant intactId="EBI-3925505">
        <id>Q8TBB0</id>
        <label>THAP6</label>
    </interactant>
    <organismsDiffer>false</organismsDiffer>
    <experiments>3</experiments>
</comment>
<comment type="interaction">
    <interactant intactId="EBI-11959475">
        <id>P25791-3</id>
    </interactant>
    <interactant intactId="EBI-11741437">
        <id>Q08117-2</id>
        <label>TLE5</label>
    </interactant>
    <organismsDiffer>false</organismsDiffer>
    <experiments>3</experiments>
</comment>
<comment type="interaction">
    <interactant intactId="EBI-11959475">
        <id>P25791-3</id>
    </interactant>
    <interactant intactId="EBI-492476">
        <id>Q96RU7</id>
        <label>TRIB3</label>
    </interactant>
    <organismsDiffer>false</organismsDiffer>
    <experiments>3</experiments>
</comment>
<comment type="interaction">
    <interactant intactId="EBI-11959475">
        <id>P25791-3</id>
    </interactant>
    <interactant intactId="EBI-12806590">
        <id>Q86WV8</id>
        <label>TSC1</label>
    </interactant>
    <organismsDiffer>false</organismsDiffer>
    <experiments>3</experiments>
</comment>
<comment type="interaction">
    <interactant intactId="EBI-11959475">
        <id>P25791-3</id>
    </interactant>
    <interactant intactId="EBI-372432">
        <id>Q8WW01</id>
        <label>TSEN15</label>
    </interactant>
    <organismsDiffer>false</organismsDiffer>
    <experiments>3</experiments>
</comment>
<comment type="interaction">
    <interactant intactId="EBI-11959475">
        <id>P25791-3</id>
    </interactant>
    <interactant intactId="EBI-2559824">
        <id>Q7Z6J9</id>
        <label>TSEN54</label>
    </interactant>
    <organismsDiffer>false</organismsDiffer>
    <experiments>3</experiments>
</comment>
<comment type="interaction">
    <interactant intactId="EBI-11959475">
        <id>P25791-3</id>
    </interactant>
    <interactant intactId="EBI-10241197">
        <id>Q3SY00</id>
        <label>TSGA10IP</label>
    </interactant>
    <organismsDiffer>false</organismsDiffer>
    <experiments>3</experiments>
</comment>
<comment type="interaction">
    <interactant intactId="EBI-11959475">
        <id>P25791-3</id>
    </interactant>
    <interactant intactId="EBI-947459">
        <id>Q9H2G4</id>
        <label>TSPYL2</label>
    </interactant>
    <organismsDiffer>false</organismsDiffer>
    <experiments>3</experiments>
</comment>
<comment type="interaction">
    <interactant intactId="EBI-11959475">
        <id>P25791-3</id>
    </interactant>
    <interactant intactId="EBI-3918381">
        <id>Q96PN8</id>
        <label>TSSK3</label>
    </interactant>
    <organismsDiffer>false</organismsDiffer>
    <experiments>3</experiments>
</comment>
<comment type="interaction">
    <interactant intactId="EBI-11959475">
        <id>P25791-3</id>
    </interactant>
    <interactant intactId="EBI-1380492">
        <id>Q8TF42</id>
        <label>UBASH3B</label>
    </interactant>
    <organismsDiffer>false</organismsDiffer>
    <experiments>3</experiments>
</comment>
<comment type="interaction">
    <interactant intactId="EBI-11959475">
        <id>P25791-3</id>
    </interactant>
    <interactant intactId="EBI-8601749">
        <id>Q495M9</id>
        <label>USH1G</label>
    </interactant>
    <organismsDiffer>false</organismsDiffer>
    <experiments>3</experiments>
</comment>
<comment type="interaction">
    <interactant intactId="EBI-11959475">
        <id>P25791-3</id>
    </interactant>
    <interactant intactId="EBI-357430">
        <id>P61758</id>
        <label>VBP1</label>
    </interactant>
    <organismsDiffer>false</organismsDiffer>
    <experiments>3</experiments>
</comment>
<comment type="interaction">
    <interactant intactId="EBI-11959475">
        <id>P25791-3</id>
    </interactant>
    <interactant intactId="EBI-11980193">
        <id>Q14119</id>
        <label>VEZF1</label>
    </interactant>
    <organismsDiffer>false</organismsDiffer>
    <experiments>3</experiments>
</comment>
<comment type="interaction">
    <interactant intactId="EBI-11959475">
        <id>P25791-3</id>
    </interactant>
    <interactant intactId="EBI-2803134">
        <id>Q2NL98</id>
        <label>VMAC</label>
    </interactant>
    <organismsDiffer>false</organismsDiffer>
    <experiments>3</experiments>
</comment>
<comment type="interaction">
    <interactant intactId="EBI-11959475">
        <id>P25791-3</id>
    </interactant>
    <interactant intactId="EBI-1548747">
        <id>Q92558</id>
        <label>WASF1</label>
    </interactant>
    <organismsDiffer>false</organismsDiffer>
    <experiments>3</experiments>
</comment>
<comment type="interaction">
    <interactant intactId="EBI-11959475">
        <id>P25791-3</id>
    </interactant>
    <interactant intactId="EBI-2510804">
        <id>Q5VVQ6</id>
        <label>YOD1</label>
    </interactant>
    <organismsDiffer>false</organismsDiffer>
    <experiments>3</experiments>
</comment>
<comment type="interaction">
    <interactant intactId="EBI-11959475">
        <id>P25791-3</id>
    </interactant>
    <interactant intactId="EBI-12030590">
        <id>Q9H0C1</id>
        <label>ZMYND12</label>
    </interactant>
    <organismsDiffer>false</organismsDiffer>
    <experiments>3</experiments>
</comment>
<comment type="interaction">
    <interactant intactId="EBI-11959475">
        <id>P25791-3</id>
    </interactant>
    <interactant intactId="EBI-6874731">
        <id>O15231</id>
        <label>ZNF185</label>
    </interactant>
    <organismsDiffer>false</organismsDiffer>
    <experiments>3</experiments>
</comment>
<comment type="interaction">
    <interactant intactId="EBI-11959475">
        <id>P25791-3</id>
    </interactant>
    <interactant intactId="EBI-12884200">
        <id>P17023</id>
        <label>ZNF19</label>
    </interactant>
    <organismsDiffer>false</organismsDiffer>
    <experiments>3</experiments>
</comment>
<comment type="interaction">
    <interactant intactId="EBI-11959475">
        <id>P25791-3</id>
    </interactant>
    <interactant intactId="EBI-707773">
        <id>P17028</id>
        <label>ZNF24</label>
    </interactant>
    <organismsDiffer>false</organismsDiffer>
    <experiments>3</experiments>
</comment>
<comment type="interaction">
    <interactant intactId="EBI-11959475">
        <id>P25791-3</id>
    </interactant>
    <interactant intactId="EBI-10177272">
        <id>P15622-3</id>
        <label>ZNF250</label>
    </interactant>
    <organismsDiffer>false</organismsDiffer>
    <experiments>3</experiments>
</comment>
<comment type="interaction">
    <interactant intactId="EBI-11959475">
        <id>P25791-3</id>
    </interactant>
    <interactant intactId="EBI-11741890">
        <id>Q86VK4-3</id>
        <label>ZNF410</label>
    </interactant>
    <organismsDiffer>false</organismsDiffer>
    <experiments>5</experiments>
</comment>
<comment type="interaction">
    <interactant intactId="EBI-11959475">
        <id>P25791-3</id>
    </interactant>
    <interactant intactId="EBI-12939666">
        <id>Q96N77-2</id>
        <label>ZNF641</label>
    </interactant>
    <organismsDiffer>false</organismsDiffer>
    <experiments>3</experiments>
</comment>
<comment type="interaction">
    <interactant intactId="EBI-11959475">
        <id>P25791-3</id>
    </interactant>
    <interactant intactId="EBI-625509">
        <id>Q8N720</id>
        <label>ZNF655</label>
    </interactant>
    <organismsDiffer>false</organismsDiffer>
    <experiments>3</experiments>
</comment>
<comment type="interaction">
    <interactant intactId="EBI-11959475">
        <id>P25791-3</id>
    </interactant>
    <interactant intactId="EBI-4395732">
        <id>P0C7X2</id>
        <label>ZNF688</label>
    </interactant>
    <organismsDiffer>false</organismsDiffer>
    <experiments>3</experiments>
</comment>
<comment type="subcellular location">
    <subcellularLocation>
        <location evidence="7">Nucleus</location>
    </subcellularLocation>
</comment>
<comment type="alternative products">
    <event type="alternative splicing"/>
    <isoform>
        <id>P25791-1</id>
        <name>1</name>
        <name>LMO2a</name>
        <sequence type="displayed"/>
    </isoform>
    <isoform>
        <id>P25791-3</id>
        <name>3</name>
        <sequence type="described" ref="VSP_038961"/>
    </isoform>
    <isoform>
        <id>P25791-4</id>
        <name>2</name>
        <sequence type="described" ref="VSP_038962 VSP_038963"/>
    </isoform>
</comment>
<comment type="domain">
    <text>The second LIM zinc-binding domain interacts with KDM5A.</text>
</comment>
<comment type="disease">
    <text>A chromosomal aberration involving LMO2 may be a cause of a form of T-cell acute lymphoblastic leukemia (T-ALL). Translocation t(11,14)(p13;q11) with TCRD.</text>
</comment>
<comment type="miscellaneous">
    <molecule>Isoform 2</molecule>
    <text evidence="7">May be produced at very low levels due to a premature stop codon in the mRNA, leading to nonsense-mediated mRNA decay.</text>
</comment>
<comment type="sequence caution" evidence="7">
    <conflict type="miscellaneous discrepancy">
        <sequence resource="EMBL-CDS" id="AAF98804"/>
    </conflict>
    <text>Intron retention.</text>
</comment>
<comment type="sequence caution" evidence="7">
    <conflict type="erroneous translation">
        <sequence resource="EMBL-CDS" id="AAH73973"/>
    </conflict>
    <text>Wrong choice of CDS.</text>
</comment>
<comment type="sequence caution" evidence="7">
    <conflict type="frameshift">
        <sequence resource="EMBL-CDS" id="CAA43430"/>
    </conflict>
</comment>
<comment type="online information" name="Atlas of Genetics and Cytogenetics in Oncology and Haematology">
    <link uri="https://atlasgeneticsoncology.org/gene/34/RBTN2"/>
</comment>
<name>RBTN2_HUMAN</name>
<organism>
    <name type="scientific">Homo sapiens</name>
    <name type="common">Human</name>
    <dbReference type="NCBI Taxonomy" id="9606"/>
    <lineage>
        <taxon>Eukaryota</taxon>
        <taxon>Metazoa</taxon>
        <taxon>Chordata</taxon>
        <taxon>Craniata</taxon>
        <taxon>Vertebrata</taxon>
        <taxon>Euteleostomi</taxon>
        <taxon>Mammalia</taxon>
        <taxon>Eutheria</taxon>
        <taxon>Euarchontoglires</taxon>
        <taxon>Primates</taxon>
        <taxon>Haplorrhini</taxon>
        <taxon>Catarrhini</taxon>
        <taxon>Hominidae</taxon>
        <taxon>Homo</taxon>
    </lineage>
</organism>
<feature type="chain" id="PRO_0000075896" description="Rhombotin-2">
    <location>
        <begin position="1"/>
        <end position="158"/>
    </location>
</feature>
<feature type="domain" description="LIM zinc-binding 1" evidence="2">
    <location>
        <begin position="30"/>
        <end position="89"/>
    </location>
</feature>
<feature type="domain" description="LIM zinc-binding 2" evidence="2">
    <location>
        <begin position="94"/>
        <end position="153"/>
    </location>
</feature>
<feature type="splice variant" id="VSP_038961" description="In isoform 3." evidence="6">
    <original>M</original>
    <variation>MEGSAVTVLERGGASSPAERRSKRRRRSGGDGGGGGGARAPEGVRAPAAGQPRATKGAPPPPGTPPPSPM</variation>
    <location>
        <position position="1"/>
    </location>
</feature>
<feature type="splice variant" id="VSP_038962" description="In isoform 2." evidence="5">
    <original>E</original>
    <variation>SLKGSQVRCPVWPKTISDPRCWSHSGEAVPDAWPSLQGTSG</variation>
    <location>
        <position position="15"/>
    </location>
</feature>
<feature type="splice variant" id="VSP_038963" description="In isoform 2." evidence="5">
    <location>
        <begin position="16"/>
        <end position="158"/>
    </location>
</feature>
<feature type="turn" evidence="10">
    <location>
        <begin position="25"/>
        <end position="27"/>
    </location>
</feature>
<feature type="turn" evidence="8">
    <location>
        <begin position="31"/>
        <end position="33"/>
    </location>
</feature>
<feature type="strand" evidence="8">
    <location>
        <begin position="39"/>
        <end position="45"/>
    </location>
</feature>
<feature type="strand" evidence="8">
    <location>
        <begin position="48"/>
        <end position="51"/>
    </location>
</feature>
<feature type="turn" evidence="8">
    <location>
        <begin position="52"/>
        <end position="54"/>
    </location>
</feature>
<feature type="turn" evidence="8">
    <location>
        <begin position="58"/>
        <end position="60"/>
    </location>
</feature>
<feature type="turn" evidence="9">
    <location>
        <begin position="64"/>
        <end position="66"/>
    </location>
</feature>
<feature type="strand" evidence="8">
    <location>
        <begin position="71"/>
        <end position="74"/>
    </location>
</feature>
<feature type="strand" evidence="8">
    <location>
        <begin position="77"/>
        <end position="79"/>
    </location>
</feature>
<feature type="helix" evidence="8">
    <location>
        <begin position="81"/>
        <end position="88"/>
    </location>
</feature>
<feature type="turn" evidence="8">
    <location>
        <begin position="95"/>
        <end position="97"/>
    </location>
</feature>
<feature type="strand" evidence="8">
    <location>
        <begin position="105"/>
        <end position="110"/>
    </location>
</feature>
<feature type="strand" evidence="8">
    <location>
        <begin position="113"/>
        <end position="116"/>
    </location>
</feature>
<feature type="helix" evidence="8">
    <location>
        <begin position="117"/>
        <end position="119"/>
    </location>
</feature>
<feature type="turn" evidence="8">
    <location>
        <begin position="123"/>
        <end position="125"/>
    </location>
</feature>
<feature type="strand" evidence="8">
    <location>
        <begin position="134"/>
        <end position="138"/>
    </location>
</feature>
<feature type="strand" evidence="8">
    <location>
        <begin position="141"/>
        <end position="144"/>
    </location>
</feature>
<feature type="helix" evidence="8">
    <location>
        <begin position="145"/>
        <end position="147"/>
    </location>
</feature>
<feature type="helix" evidence="8">
    <location>
        <begin position="148"/>
        <end position="155"/>
    </location>
</feature>
<gene>
    <name type="primary">LMO2</name>
    <name type="synonym">RBTN2</name>
    <name type="synonym">RBTNL1</name>
    <name type="synonym">RHOM2</name>
    <name type="synonym">TTG2</name>
</gene>
<keyword id="KW-0002">3D-structure</keyword>
<keyword id="KW-0025">Alternative splicing</keyword>
<keyword id="KW-0160">Chromosomal rearrangement</keyword>
<keyword id="KW-0440">LIM domain</keyword>
<keyword id="KW-0479">Metal-binding</keyword>
<keyword id="KW-0539">Nucleus</keyword>
<keyword id="KW-1267">Proteomics identification</keyword>
<keyword id="KW-0656">Proto-oncogene</keyword>
<keyword id="KW-1185">Reference proteome</keyword>
<keyword id="KW-0677">Repeat</keyword>
<keyword id="KW-0862">Zinc</keyword>
<protein>
    <recommendedName>
        <fullName>Rhombotin-2</fullName>
    </recommendedName>
    <alternativeName>
        <fullName>Cysteine-rich protein TTG-2</fullName>
    </alternativeName>
    <alternativeName>
        <fullName>LIM domain only protein 2</fullName>
        <shortName>LMO-2</shortName>
    </alternativeName>
    <alternativeName>
        <fullName>T-cell translocation protein 2</fullName>
    </alternativeName>
</protein>
<sequence length="158" mass="18358">MSSAIERKSLDPSEEPVDEVLQIPPSLLTCGGCQQNIGDRYFLKAIDQYWHEDCLSCDLCGCRLGEVGRRLYYKLGRKLCRRDYLRLFGQDGLCASCDKRIRAYEMTMRVKDKVYHLECFKCAACQKHFCVGDRYLLINSDIVCEQDIYEWTKINGMI</sequence>
<dbReference type="EMBL" id="X61118">
    <property type="protein sequence ID" value="CAA43430.1"/>
    <property type="status" value="ALT_FRAME"/>
    <property type="molecule type" value="mRNA"/>
</dbReference>
<dbReference type="EMBL" id="BC034041">
    <property type="protein sequence ID" value="AAH34041.1"/>
    <property type="molecule type" value="mRNA"/>
</dbReference>
<dbReference type="EMBL" id="BC035607">
    <property type="protein sequence ID" value="AAH35607.1"/>
    <property type="molecule type" value="mRNA"/>
</dbReference>
<dbReference type="EMBL" id="BC042426">
    <property type="protein sequence ID" value="AAH42426.1"/>
    <property type="molecule type" value="mRNA"/>
</dbReference>
<dbReference type="EMBL" id="BC073973">
    <property type="protein sequence ID" value="AAH73973.1"/>
    <property type="status" value="ALT_SEQ"/>
    <property type="molecule type" value="mRNA"/>
</dbReference>
<dbReference type="EMBL" id="AF257211">
    <property type="protein sequence ID" value="AAF98804.1"/>
    <property type="status" value="ALT_SEQ"/>
    <property type="molecule type" value="mRNA"/>
</dbReference>
<dbReference type="CCDS" id="CCDS44567.1">
    <molecule id="P25791-1"/>
</dbReference>
<dbReference type="CCDS" id="CCDS7888.2">
    <molecule id="P25791-3"/>
</dbReference>
<dbReference type="PIR" id="S29477">
    <property type="entry name" value="S29477"/>
</dbReference>
<dbReference type="RefSeq" id="NP_001135787.1">
    <molecule id="P25791-1"/>
    <property type="nucleotide sequence ID" value="NM_001142315.2"/>
</dbReference>
<dbReference type="RefSeq" id="NP_001135788.1">
    <molecule id="P25791-1"/>
    <property type="nucleotide sequence ID" value="NM_001142316.2"/>
</dbReference>
<dbReference type="RefSeq" id="NP_005565.2">
    <molecule id="P25791-3"/>
    <property type="nucleotide sequence ID" value="NM_005574.4"/>
</dbReference>
<dbReference type="RefSeq" id="XP_005252978.1">
    <property type="nucleotide sequence ID" value="XM_005252921.2"/>
</dbReference>
<dbReference type="RefSeq" id="XP_016873216.1">
    <property type="nucleotide sequence ID" value="XM_017017727.1"/>
</dbReference>
<dbReference type="RefSeq" id="XP_016873217.1">
    <property type="nucleotide sequence ID" value="XM_017017728.1"/>
</dbReference>
<dbReference type="RefSeq" id="XP_016873218.1">
    <property type="nucleotide sequence ID" value="XM_017017729.1"/>
</dbReference>
<dbReference type="RefSeq" id="XP_016873219.1">
    <property type="nucleotide sequence ID" value="XM_017017730.1"/>
</dbReference>
<dbReference type="RefSeq" id="XP_016873220.1">
    <property type="nucleotide sequence ID" value="XM_017017731.1"/>
</dbReference>
<dbReference type="RefSeq" id="XP_016873221.1">
    <property type="nucleotide sequence ID" value="XM_017017732.1"/>
</dbReference>
<dbReference type="RefSeq" id="XP_016873222.1">
    <molecule id="P25791-1"/>
    <property type="nucleotide sequence ID" value="XM_017017733.2"/>
</dbReference>
<dbReference type="RefSeq" id="XP_047282900.1">
    <molecule id="P25791-3"/>
    <property type="nucleotide sequence ID" value="XM_047426944.1"/>
</dbReference>
<dbReference type="RefSeq" id="XP_047282901.1">
    <molecule id="P25791-1"/>
    <property type="nucleotide sequence ID" value="XM_047426945.1"/>
</dbReference>
<dbReference type="RefSeq" id="XP_047282902.1">
    <molecule id="P25791-1"/>
    <property type="nucleotide sequence ID" value="XM_047426946.1"/>
</dbReference>
<dbReference type="RefSeq" id="XP_054224749.1">
    <molecule id="P25791-3"/>
    <property type="nucleotide sequence ID" value="XM_054368774.1"/>
</dbReference>
<dbReference type="RefSeq" id="XP_054224750.1">
    <molecule id="P25791-3"/>
    <property type="nucleotide sequence ID" value="XM_054368775.1"/>
</dbReference>
<dbReference type="RefSeq" id="XP_054224751.1">
    <molecule id="P25791-1"/>
    <property type="nucleotide sequence ID" value="XM_054368776.1"/>
</dbReference>
<dbReference type="RefSeq" id="XP_054224752.1">
    <molecule id="P25791-1"/>
    <property type="nucleotide sequence ID" value="XM_054368777.1"/>
</dbReference>
<dbReference type="RefSeq" id="XP_054224753.1">
    <molecule id="P25791-1"/>
    <property type="nucleotide sequence ID" value="XM_054368778.1"/>
</dbReference>
<dbReference type="RefSeq" id="XP_054224754.1">
    <molecule id="P25791-1"/>
    <property type="nucleotide sequence ID" value="XM_054368779.1"/>
</dbReference>
<dbReference type="PDB" id="2XJY">
    <property type="method" value="X-ray"/>
    <property type="resolution" value="2.40 A"/>
    <property type="chains" value="A=26-156"/>
</dbReference>
<dbReference type="PDB" id="2XJZ">
    <property type="method" value="X-ray"/>
    <property type="resolution" value="2.80 A"/>
    <property type="chains" value="A/B/C/D/E=26-156"/>
</dbReference>
<dbReference type="PDB" id="2YPA">
    <property type="method" value="X-ray"/>
    <property type="resolution" value="2.80 A"/>
    <property type="chains" value="C=25-156"/>
</dbReference>
<dbReference type="PDB" id="4KFZ">
    <property type="method" value="X-ray"/>
    <property type="resolution" value="2.80 A"/>
    <property type="chains" value="A/B=9-158"/>
</dbReference>
<dbReference type="PDBsum" id="2XJY"/>
<dbReference type="PDBsum" id="2XJZ"/>
<dbReference type="PDBsum" id="2YPA"/>
<dbReference type="PDBsum" id="4KFZ"/>
<dbReference type="BMRB" id="P25791"/>
<dbReference type="SMR" id="P25791"/>
<dbReference type="BioGRID" id="110191">
    <property type="interactions" value="254"/>
</dbReference>
<dbReference type="CORUM" id="P25791"/>
<dbReference type="FunCoup" id="P25791">
    <property type="interactions" value="996"/>
</dbReference>
<dbReference type="IntAct" id="P25791">
    <property type="interactions" value="234"/>
</dbReference>
<dbReference type="MINT" id="P25791"/>
<dbReference type="STRING" id="9606.ENSP00000257818"/>
<dbReference type="ChEMBL" id="CHEMBL3217402"/>
<dbReference type="iPTMnet" id="P25791"/>
<dbReference type="PhosphoSitePlus" id="P25791"/>
<dbReference type="BioMuta" id="LMO2"/>
<dbReference type="DMDM" id="132533"/>
<dbReference type="MassIVE" id="P25791"/>
<dbReference type="PaxDb" id="9606-ENSP00000257818"/>
<dbReference type="PeptideAtlas" id="P25791"/>
<dbReference type="ProteomicsDB" id="54294">
    <molecule id="P25791-1"/>
</dbReference>
<dbReference type="ProteomicsDB" id="54295">
    <molecule id="P25791-3"/>
</dbReference>
<dbReference type="Pumba" id="P25791"/>
<dbReference type="ABCD" id="P25791">
    <property type="antibodies" value="1 sequenced antibody"/>
</dbReference>
<dbReference type="Antibodypedia" id="4265">
    <property type="antibodies" value="782 antibodies from 42 providers"/>
</dbReference>
<dbReference type="DNASU" id="4005"/>
<dbReference type="Ensembl" id="ENST00000257818.3">
    <molecule id="P25791-3"/>
    <property type="protein sequence ID" value="ENSP00000257818.2"/>
    <property type="gene ID" value="ENSG00000135363.12"/>
</dbReference>
<dbReference type="Ensembl" id="ENST00000395833.7">
    <molecule id="P25791-1"/>
    <property type="protein sequence ID" value="ENSP00000379175.3"/>
    <property type="gene ID" value="ENSG00000135363.12"/>
</dbReference>
<dbReference type="Ensembl" id="ENST00000411482.1">
    <molecule id="P25791-4"/>
    <property type="protein sequence ID" value="ENSP00000401967.1"/>
    <property type="gene ID" value="ENSG00000135363.12"/>
</dbReference>
<dbReference type="GeneID" id="4005"/>
<dbReference type="KEGG" id="hsa:4005"/>
<dbReference type="MANE-Select" id="ENST00000257818.3">
    <molecule id="P25791-3"/>
    <property type="protein sequence ID" value="ENSP00000257818.2"/>
    <property type="RefSeq nucleotide sequence ID" value="NM_005574.4"/>
    <property type="RefSeq protein sequence ID" value="NP_005565.2"/>
</dbReference>
<dbReference type="UCSC" id="uc001mve.5">
    <molecule id="P25791-1"/>
    <property type="organism name" value="human"/>
</dbReference>
<dbReference type="AGR" id="HGNC:6642"/>
<dbReference type="CTD" id="4005"/>
<dbReference type="DisGeNET" id="4005"/>
<dbReference type="GeneCards" id="LMO2"/>
<dbReference type="HGNC" id="HGNC:6642">
    <property type="gene designation" value="LMO2"/>
</dbReference>
<dbReference type="HPA" id="ENSG00000135363">
    <property type="expression patterns" value="Low tissue specificity"/>
</dbReference>
<dbReference type="MalaCards" id="LMO2"/>
<dbReference type="MIM" id="180385">
    <property type="type" value="gene"/>
</dbReference>
<dbReference type="neXtProt" id="NX_P25791"/>
<dbReference type="OpenTargets" id="ENSG00000135363"/>
<dbReference type="PharmGKB" id="PA30408"/>
<dbReference type="VEuPathDB" id="HostDB:ENSG00000135363"/>
<dbReference type="eggNOG" id="KOG0490">
    <property type="taxonomic scope" value="Eukaryota"/>
</dbReference>
<dbReference type="GeneTree" id="ENSGT00940000160199"/>
<dbReference type="HOGENOM" id="CLU_3031687_0_0_1"/>
<dbReference type="InParanoid" id="P25791"/>
<dbReference type="OMA" id="MCGGCQQ"/>
<dbReference type="OrthoDB" id="6352355at2759"/>
<dbReference type="PAN-GO" id="P25791">
    <property type="GO annotations" value="4 GO annotations based on evolutionary models"/>
</dbReference>
<dbReference type="PhylomeDB" id="P25791"/>
<dbReference type="TreeFam" id="TF351071"/>
<dbReference type="PathwayCommons" id="P25791"/>
<dbReference type="Reactome" id="R-HSA-8939236">
    <property type="pathway name" value="RUNX1 regulates transcription of genes involved in differentiation of HSCs"/>
</dbReference>
<dbReference type="SignaLink" id="P25791"/>
<dbReference type="SIGNOR" id="P25791"/>
<dbReference type="BioGRID-ORCS" id="4005">
    <property type="hits" value="41 hits in 1164 CRISPR screens"/>
</dbReference>
<dbReference type="ChiTaRS" id="LMO2">
    <property type="organism name" value="human"/>
</dbReference>
<dbReference type="EvolutionaryTrace" id="P25791"/>
<dbReference type="GeneWiki" id="LMO2"/>
<dbReference type="GenomeRNAi" id="4005"/>
<dbReference type="Pharos" id="P25791">
    <property type="development level" value="Tbio"/>
</dbReference>
<dbReference type="PRO" id="PR:P25791"/>
<dbReference type="Proteomes" id="UP000005640">
    <property type="component" value="Chromosome 11"/>
</dbReference>
<dbReference type="RNAct" id="P25791">
    <property type="molecule type" value="protein"/>
</dbReference>
<dbReference type="Bgee" id="ENSG00000135363">
    <property type="expression patterns" value="Expressed in monocyte and 211 other cell types or tissues"/>
</dbReference>
<dbReference type="GO" id="GO:0005654">
    <property type="term" value="C:nucleoplasm"/>
    <property type="evidence" value="ECO:0000304"/>
    <property type="project" value="Reactome"/>
</dbReference>
<dbReference type="GO" id="GO:0005634">
    <property type="term" value="C:nucleus"/>
    <property type="evidence" value="ECO:0000318"/>
    <property type="project" value="GO_Central"/>
</dbReference>
<dbReference type="GO" id="GO:0005667">
    <property type="term" value="C:transcription regulator complex"/>
    <property type="evidence" value="ECO:0000314"/>
    <property type="project" value="BHF-UCL"/>
</dbReference>
<dbReference type="GO" id="GO:0043425">
    <property type="term" value="F:bHLH transcription factor binding"/>
    <property type="evidence" value="ECO:0000353"/>
    <property type="project" value="BHF-UCL"/>
</dbReference>
<dbReference type="GO" id="GO:0140297">
    <property type="term" value="F:DNA-binding transcription factor binding"/>
    <property type="evidence" value="ECO:0000318"/>
    <property type="project" value="GO_Central"/>
</dbReference>
<dbReference type="GO" id="GO:0042802">
    <property type="term" value="F:identical protein binding"/>
    <property type="evidence" value="ECO:0000353"/>
    <property type="project" value="IntAct"/>
</dbReference>
<dbReference type="GO" id="GO:0046872">
    <property type="term" value="F:metal ion binding"/>
    <property type="evidence" value="ECO:0007669"/>
    <property type="project" value="UniProtKB-KW"/>
</dbReference>
<dbReference type="GO" id="GO:0061629">
    <property type="term" value="F:RNA polymerase II-specific DNA-binding transcription factor binding"/>
    <property type="evidence" value="ECO:0000353"/>
    <property type="project" value="BHF-UCL"/>
</dbReference>
<dbReference type="GO" id="GO:0003713">
    <property type="term" value="F:transcription coactivator activity"/>
    <property type="evidence" value="ECO:0000314"/>
    <property type="project" value="BHF-UCL"/>
</dbReference>
<dbReference type="GO" id="GO:0001221">
    <property type="term" value="F:transcription coregulator binding"/>
    <property type="evidence" value="ECO:0000353"/>
    <property type="project" value="BHF-UCL"/>
</dbReference>
<dbReference type="GO" id="GO:0045944">
    <property type="term" value="P:positive regulation of transcription by RNA polymerase II"/>
    <property type="evidence" value="ECO:0000314"/>
    <property type="project" value="BHF-UCL"/>
</dbReference>
<dbReference type="CDD" id="cd09384">
    <property type="entry name" value="LIM1_LMO2"/>
    <property type="match status" value="1"/>
</dbReference>
<dbReference type="CDD" id="cd09385">
    <property type="entry name" value="LIM2_LMO2"/>
    <property type="match status" value="1"/>
</dbReference>
<dbReference type="FunFam" id="2.10.110.10:FF:000059">
    <property type="entry name" value="LIM domain only 2"/>
    <property type="match status" value="1"/>
</dbReference>
<dbReference type="FunFam" id="2.10.110.10:FF:000016">
    <property type="entry name" value="LIM domain only 3"/>
    <property type="match status" value="1"/>
</dbReference>
<dbReference type="Gene3D" id="2.10.110.10">
    <property type="entry name" value="Cysteine Rich Protein"/>
    <property type="match status" value="2"/>
</dbReference>
<dbReference type="IDEAL" id="IID00268"/>
<dbReference type="InterPro" id="IPR050945">
    <property type="entry name" value="LMO_RBTN_TF"/>
</dbReference>
<dbReference type="InterPro" id="IPR001781">
    <property type="entry name" value="Znf_LIM"/>
</dbReference>
<dbReference type="PANTHER" id="PTHR45787">
    <property type="entry name" value="LD11652P"/>
    <property type="match status" value="1"/>
</dbReference>
<dbReference type="PANTHER" id="PTHR45787:SF3">
    <property type="entry name" value="RHOMBOTIN-2"/>
    <property type="match status" value="1"/>
</dbReference>
<dbReference type="Pfam" id="PF00412">
    <property type="entry name" value="LIM"/>
    <property type="match status" value="2"/>
</dbReference>
<dbReference type="SMART" id="SM00132">
    <property type="entry name" value="LIM"/>
    <property type="match status" value="2"/>
</dbReference>
<dbReference type="SUPFAM" id="SSF57716">
    <property type="entry name" value="Glucocorticoid receptor-like (DNA-binding domain)"/>
    <property type="match status" value="2"/>
</dbReference>
<dbReference type="PROSITE" id="PS00478">
    <property type="entry name" value="LIM_DOMAIN_1"/>
    <property type="match status" value="2"/>
</dbReference>
<dbReference type="PROSITE" id="PS50023">
    <property type="entry name" value="LIM_DOMAIN_2"/>
    <property type="match status" value="2"/>
</dbReference>
<evidence type="ECO:0000250" key="1"/>
<evidence type="ECO:0000255" key="2">
    <source>
        <dbReference type="PROSITE-ProRule" id="PRU00125"/>
    </source>
</evidence>
<evidence type="ECO:0000269" key="3">
    <source>
    </source>
</evidence>
<evidence type="ECO:0000269" key="4">
    <source>
    </source>
</evidence>
<evidence type="ECO:0000303" key="5">
    <source>
    </source>
</evidence>
<evidence type="ECO:0000303" key="6">
    <source>
    </source>
</evidence>
<evidence type="ECO:0000305" key="7"/>
<evidence type="ECO:0007829" key="8">
    <source>
        <dbReference type="PDB" id="2XJY"/>
    </source>
</evidence>
<evidence type="ECO:0007829" key="9">
    <source>
        <dbReference type="PDB" id="2XJZ"/>
    </source>
</evidence>
<evidence type="ECO:0007829" key="10">
    <source>
        <dbReference type="PDB" id="4KFZ"/>
    </source>
</evidence>